<comment type="function">
    <text evidence="5">May play a structural role at sites of cell adhesion in maintaining cell shape and motility. In addition to these structural functions, it may also be implicated in signaling events and activation of gene transcription. May be involved in signal transduction from cell adhesion sites to the nucleus allowing successful integration of signals arising from soluble factors and cell-cell adhesion sites. Also suggested to serve as a scaffold protein upon which distinct protein complexes are assembled in the cytoplasm and in the nucleus.</text>
</comment>
<comment type="subunit">
    <text evidence="5 6 7 8">Interacts with VASP, with PDZ domains of SCRIB and with ACTN1/alpha-actinin.</text>
</comment>
<comment type="subcellular location">
    <subcellularLocation>
        <location>Nucleus</location>
    </subcellularLocation>
    <subcellularLocation>
        <location>Cytoplasm</location>
    </subcellularLocation>
    <subcellularLocation>
        <location>Cell junction</location>
    </subcellularLocation>
    <subcellularLocation>
        <location>Cell membrane</location>
    </subcellularLocation>
    <text>Found in the nucleus, in the cytoplasm and at cell adhesion sites. Shuttles between the cytoplasm and the nucleus. It has been found in sites of cell adhesion such as cell-to-cell contact and focal adhesion which are membrane attachment sites of cells to the extracellular matrix. Mainly nuclear when fused with HMGA2/HMGIC and KMT2A/MLL1.</text>
</comment>
<comment type="tissue specificity">
    <text evidence="5 9">Expressed in a wide variety of tissues but no or very low expression in brain and peripheral leukocytes.</text>
</comment>
<comment type="disease">
    <text>A chromosomal aberration involving LPP is associated with a subclass of benign mesenchymal tumors known as lipomas. Translocation t(3;12)(q27-q28;q13-q15) with HMGA2 is shown in lipomas.</text>
</comment>
<comment type="disease">
    <text>A chromosomal aberration involving LPP is associated with pulmonary chondroid hamartomas. Translocation t(3;12)(q27-q28;q14-q15) with HMGA2 is detected in pulmonary chondroid hamartomas.</text>
</comment>
<comment type="disease">
    <text>A chromosomal aberration involving LPP is associated with parosteal lipomas. Translocation t(3;12)(q28;q14) with HMGA2 is also shown in one parosteal lipoma.</text>
</comment>
<comment type="disease">
    <text>A chromosomal aberration involving LPP is associated with acute monoblastic leukemia. Translocation t(3;11)(q28;q23) with KMT2A/MLL1 is associated with acute monoblastic leukemia.</text>
</comment>
<comment type="similarity">
    <text evidence="10">Belongs to the zyxin/ajuba family.</text>
</comment>
<comment type="online information" name="Atlas of Genetics and Cytogenetics in Oncology and Haematology">
    <link uri="https://atlasgeneticsoncology.org/gene/72/LPP"/>
</comment>
<name>LPP_HUMAN</name>
<evidence type="ECO:0000250" key="1">
    <source>
        <dbReference type="UniProtKB" id="Q5XI07"/>
    </source>
</evidence>
<evidence type="ECO:0000250" key="2">
    <source>
        <dbReference type="UniProtKB" id="Q8BFW7"/>
    </source>
</evidence>
<evidence type="ECO:0000255" key="3">
    <source>
        <dbReference type="PROSITE-ProRule" id="PRU00125"/>
    </source>
</evidence>
<evidence type="ECO:0000256" key="4">
    <source>
        <dbReference type="SAM" id="MobiDB-lite"/>
    </source>
</evidence>
<evidence type="ECO:0000269" key="5">
    <source>
    </source>
</evidence>
<evidence type="ECO:0000269" key="6">
    <source>
    </source>
</evidence>
<evidence type="ECO:0000269" key="7">
    <source>
    </source>
</evidence>
<evidence type="ECO:0000269" key="8">
    <source>
    </source>
</evidence>
<evidence type="ECO:0000269" key="9">
    <source>
    </source>
</evidence>
<evidence type="ECO:0000305" key="10"/>
<evidence type="ECO:0007744" key="11">
    <source>
    </source>
</evidence>
<evidence type="ECO:0007744" key="12">
    <source>
    </source>
</evidence>
<evidence type="ECO:0007744" key="13">
    <source>
    </source>
</evidence>
<accession>Q93052</accession>
<accession>A1L4L6</accession>
<accession>D3DNV6</accession>
<accession>Q8NFX5</accession>
<feature type="chain" id="PRO_0000075832" description="Lipoma-preferred partner">
    <location>
        <begin position="1"/>
        <end position="612"/>
    </location>
</feature>
<feature type="domain" description="LIM zinc-binding 1" evidence="3">
    <location>
        <begin position="414"/>
        <end position="473"/>
    </location>
</feature>
<feature type="domain" description="LIM zinc-binding 2" evidence="3">
    <location>
        <begin position="474"/>
        <end position="534"/>
    </location>
</feature>
<feature type="domain" description="LIM zinc-binding 3" evidence="3">
    <location>
        <begin position="535"/>
        <end position="603"/>
    </location>
</feature>
<feature type="region of interest" description="Disordered" evidence="4">
    <location>
        <begin position="1"/>
        <end position="118"/>
    </location>
</feature>
<feature type="region of interest" description="Disordered" evidence="4">
    <location>
        <begin position="132"/>
        <end position="219"/>
    </location>
</feature>
<feature type="region of interest" description="Disordered" evidence="4">
    <location>
        <begin position="307"/>
        <end position="387"/>
    </location>
</feature>
<feature type="compositionally biased region" description="Polar residues" evidence="4">
    <location>
        <begin position="26"/>
        <end position="40"/>
    </location>
</feature>
<feature type="compositionally biased region" description="Low complexity" evidence="4">
    <location>
        <begin position="41"/>
        <end position="53"/>
    </location>
</feature>
<feature type="compositionally biased region" description="Polar residues" evidence="4">
    <location>
        <begin position="143"/>
        <end position="158"/>
    </location>
</feature>
<feature type="compositionally biased region" description="Polar residues" evidence="4">
    <location>
        <begin position="171"/>
        <end position="181"/>
    </location>
</feature>
<feature type="compositionally biased region" description="Pro residues" evidence="4">
    <location>
        <begin position="183"/>
        <end position="193"/>
    </location>
</feature>
<feature type="compositionally biased region" description="Polar residues" evidence="4">
    <location>
        <begin position="209"/>
        <end position="219"/>
    </location>
</feature>
<feature type="compositionally biased region" description="Polar residues" evidence="4">
    <location>
        <begin position="314"/>
        <end position="323"/>
    </location>
</feature>
<feature type="site" description="Breakpoint for translocation to form HMGA2-LPP">
    <location>
        <begin position="371"/>
        <end position="372"/>
    </location>
</feature>
<feature type="site" description="Breakpoint for translocation to form HMGA2-LPP and KMT2A/MLL1-LPP">
    <location>
        <begin position="470"/>
        <end position="471"/>
    </location>
</feature>
<feature type="modified residue" description="N6-acetyllysine" evidence="2">
    <location>
        <position position="108"/>
    </location>
</feature>
<feature type="modified residue" description="Phosphoserine" evidence="1">
    <location>
        <position position="116"/>
    </location>
</feature>
<feature type="modified residue" description="Phosphoserine" evidence="1">
    <location>
        <position position="151"/>
    </location>
</feature>
<feature type="modified residue" description="Phosphotyrosine" evidence="2">
    <location>
        <position position="244"/>
    </location>
</feature>
<feature type="modified residue" description="Phosphotyrosine" evidence="2">
    <location>
        <position position="301"/>
    </location>
</feature>
<feature type="modified residue" description="Phosphothreonine" evidence="11">
    <location>
        <position position="333"/>
    </location>
</feature>
<feature type="modified residue" description="Phosphoserine" evidence="12">
    <location>
        <position position="375"/>
    </location>
</feature>
<feature type="cross-link" description="Glycyl lysine isopeptide (Lys-Gly) (interchain with G-Cter in SUMO1)" evidence="13">
    <location>
        <position position="327"/>
    </location>
</feature>
<feature type="sequence variant" id="VAR_050150" description="In dbSNP:rs35417432.">
    <original>T</original>
    <variation>A</variation>
    <location>
        <position position="146"/>
    </location>
</feature>
<feature type="sequence variant" id="VAR_050151" description="In dbSNP:rs35940579.">
    <original>S</original>
    <variation>P</variation>
    <location>
        <position position="259"/>
    </location>
</feature>
<feature type="sequence variant" id="VAR_034070" description="In dbSNP:rs7645635.">
    <original>Y</original>
    <variation>H</variation>
    <location>
        <position position="346"/>
    </location>
</feature>
<feature type="mutagenesis site" description="Abolishes binding to SCRIB." evidence="8">
    <original>T</original>
    <variation>A</variation>
    <location>
        <position position="610"/>
    </location>
</feature>
<feature type="mutagenesis site" description="Abolishes binding to SCRIB." evidence="8">
    <original>L</original>
    <variation>A</variation>
    <location>
        <position position="612"/>
    </location>
</feature>
<proteinExistence type="evidence at protein level"/>
<dbReference type="EMBL" id="U49957">
    <property type="protein sequence ID" value="AAC50738.1"/>
    <property type="molecule type" value="mRNA"/>
</dbReference>
<dbReference type="EMBL" id="U49968">
    <property type="protein sequence ID" value="AAC50739.1"/>
    <property type="molecule type" value="Genomic_DNA"/>
</dbReference>
<dbReference type="EMBL" id="U49960">
    <property type="protein sequence ID" value="AAC50739.1"/>
    <property type="status" value="JOINED"/>
    <property type="molecule type" value="Genomic_DNA"/>
</dbReference>
<dbReference type="EMBL" id="U49961">
    <property type="protein sequence ID" value="AAC50739.1"/>
    <property type="status" value="JOINED"/>
    <property type="molecule type" value="Genomic_DNA"/>
</dbReference>
<dbReference type="EMBL" id="U49962">
    <property type="protein sequence ID" value="AAC50739.1"/>
    <property type="status" value="JOINED"/>
    <property type="molecule type" value="Genomic_DNA"/>
</dbReference>
<dbReference type="EMBL" id="U49963">
    <property type="protein sequence ID" value="AAC50739.1"/>
    <property type="status" value="JOINED"/>
    <property type="molecule type" value="Genomic_DNA"/>
</dbReference>
<dbReference type="EMBL" id="U49964">
    <property type="protein sequence ID" value="AAC50739.1"/>
    <property type="status" value="JOINED"/>
    <property type="molecule type" value="Genomic_DNA"/>
</dbReference>
<dbReference type="EMBL" id="U49965">
    <property type="protein sequence ID" value="AAC50739.1"/>
    <property type="status" value="JOINED"/>
    <property type="molecule type" value="Genomic_DNA"/>
</dbReference>
<dbReference type="EMBL" id="U49966">
    <property type="protein sequence ID" value="AAC50739.1"/>
    <property type="status" value="JOINED"/>
    <property type="molecule type" value="Genomic_DNA"/>
</dbReference>
<dbReference type="EMBL" id="U49967">
    <property type="protein sequence ID" value="AAC50739.1"/>
    <property type="status" value="JOINED"/>
    <property type="molecule type" value="Genomic_DNA"/>
</dbReference>
<dbReference type="EMBL" id="CR457074">
    <property type="protein sequence ID" value="CAG33355.1"/>
    <property type="molecule type" value="mRNA"/>
</dbReference>
<dbReference type="EMBL" id="CH471052">
    <property type="protein sequence ID" value="EAW78127.1"/>
    <property type="molecule type" value="Genomic_DNA"/>
</dbReference>
<dbReference type="EMBL" id="CH471052">
    <property type="protein sequence ID" value="EAW78128.1"/>
    <property type="molecule type" value="Genomic_DNA"/>
</dbReference>
<dbReference type="EMBL" id="CH471052">
    <property type="protein sequence ID" value="EAW78133.1"/>
    <property type="molecule type" value="Genomic_DNA"/>
</dbReference>
<dbReference type="EMBL" id="BC130584">
    <property type="protein sequence ID" value="AAI30585.1"/>
    <property type="molecule type" value="mRNA"/>
</dbReference>
<dbReference type="EMBL" id="AF393503">
    <property type="protein sequence ID" value="AAM73685.1"/>
    <property type="status" value="ALT_TERM"/>
    <property type="molecule type" value="mRNA"/>
</dbReference>
<dbReference type="CCDS" id="CCDS3291.1"/>
<dbReference type="RefSeq" id="NP_001161143.1">
    <property type="nucleotide sequence ID" value="NM_001167671.3"/>
</dbReference>
<dbReference type="RefSeq" id="NP_001362384.1">
    <property type="nucleotide sequence ID" value="NM_001375455.1"/>
</dbReference>
<dbReference type="RefSeq" id="NP_001362385.1">
    <property type="nucleotide sequence ID" value="NM_001375456.1"/>
</dbReference>
<dbReference type="RefSeq" id="NP_001362386.1">
    <property type="nucleotide sequence ID" value="NM_001375457.1"/>
</dbReference>
<dbReference type="RefSeq" id="NP_001362387.1">
    <property type="nucleotide sequence ID" value="NM_001375458.1"/>
</dbReference>
<dbReference type="RefSeq" id="NP_001362388.1">
    <property type="nucleotide sequence ID" value="NM_001375459.1"/>
</dbReference>
<dbReference type="RefSeq" id="NP_001362389.1">
    <property type="nucleotide sequence ID" value="NM_001375460.1"/>
</dbReference>
<dbReference type="RefSeq" id="NP_001362390.1">
    <property type="nucleotide sequence ID" value="NM_001375461.1"/>
</dbReference>
<dbReference type="RefSeq" id="NP_001362391.1">
    <property type="nucleotide sequence ID" value="NM_001375462.1"/>
</dbReference>
<dbReference type="RefSeq" id="NP_001362392.1">
    <property type="nucleotide sequence ID" value="NM_001375463.1"/>
</dbReference>
<dbReference type="RefSeq" id="NP_001362393.1">
    <property type="nucleotide sequence ID" value="NM_001375464.1"/>
</dbReference>
<dbReference type="RefSeq" id="NP_001362394.1">
    <property type="nucleotide sequence ID" value="NM_001375465.1"/>
</dbReference>
<dbReference type="RefSeq" id="NP_001374592.1">
    <property type="nucleotide sequence ID" value="NM_001387663.1"/>
</dbReference>
<dbReference type="RefSeq" id="NP_001374593.1">
    <property type="nucleotide sequence ID" value="NM_001387664.1"/>
</dbReference>
<dbReference type="RefSeq" id="NP_001374594.1">
    <property type="nucleotide sequence ID" value="NM_001387665.1"/>
</dbReference>
<dbReference type="RefSeq" id="NP_001374595.1">
    <property type="nucleotide sequence ID" value="NM_001387666.1"/>
</dbReference>
<dbReference type="RefSeq" id="NP_001374596.1">
    <property type="nucleotide sequence ID" value="NM_001387667.1"/>
</dbReference>
<dbReference type="RefSeq" id="NP_001374597.1">
    <property type="nucleotide sequence ID" value="NM_001387668.1"/>
</dbReference>
<dbReference type="RefSeq" id="NP_001374598.1">
    <property type="nucleotide sequence ID" value="NM_001387669.1"/>
</dbReference>
<dbReference type="RefSeq" id="NP_001374599.1">
    <property type="nucleotide sequence ID" value="NM_001387670.1"/>
</dbReference>
<dbReference type="RefSeq" id="NP_001374600.1">
    <property type="nucleotide sequence ID" value="NM_001387671.1"/>
</dbReference>
<dbReference type="RefSeq" id="NP_001374601.1">
    <property type="nucleotide sequence ID" value="NM_001387672.1"/>
</dbReference>
<dbReference type="RefSeq" id="NP_001374602.1">
    <property type="nucleotide sequence ID" value="NM_001387673.1"/>
</dbReference>
<dbReference type="RefSeq" id="NP_001374603.1">
    <property type="nucleotide sequence ID" value="NM_001387674.1"/>
</dbReference>
<dbReference type="RefSeq" id="NP_005569.1">
    <property type="nucleotide sequence ID" value="NM_005578.5"/>
</dbReference>
<dbReference type="RefSeq" id="XP_005247503.1">
    <property type="nucleotide sequence ID" value="XM_005247446.4"/>
</dbReference>
<dbReference type="RefSeq" id="XP_005247507.1">
    <property type="nucleotide sequence ID" value="XM_005247450.4"/>
</dbReference>
<dbReference type="RefSeq" id="XP_005247508.1">
    <property type="nucleotide sequence ID" value="XM_005247451.4"/>
</dbReference>
<dbReference type="RefSeq" id="XP_005247510.1">
    <property type="nucleotide sequence ID" value="XM_005247453.2"/>
</dbReference>
<dbReference type="RefSeq" id="XP_011511122.1">
    <property type="nucleotide sequence ID" value="XM_011512820.2"/>
</dbReference>
<dbReference type="RefSeq" id="XP_011511129.1">
    <property type="nucleotide sequence ID" value="XM_011512827.2"/>
</dbReference>
<dbReference type="RefSeq" id="XP_011511130.1">
    <property type="nucleotide sequence ID" value="XM_011512828.2"/>
</dbReference>
<dbReference type="RefSeq" id="XP_011511133.1">
    <property type="nucleotide sequence ID" value="XM_011512831.2"/>
</dbReference>
<dbReference type="RefSeq" id="XP_011511135.1">
    <property type="nucleotide sequence ID" value="XM_011512833.2"/>
</dbReference>
<dbReference type="RefSeq" id="XP_011511136.1">
    <property type="nucleotide sequence ID" value="XM_011512834.2"/>
</dbReference>
<dbReference type="RefSeq" id="XP_016861866.1">
    <property type="nucleotide sequence ID" value="XM_017006377.1"/>
</dbReference>
<dbReference type="RefSeq" id="XP_016861867.1">
    <property type="nucleotide sequence ID" value="XM_017006378.2"/>
</dbReference>
<dbReference type="RefSeq" id="XP_016861868.1">
    <property type="nucleotide sequence ID" value="XM_017006379.1"/>
</dbReference>
<dbReference type="RefSeq" id="XP_016861869.1">
    <property type="nucleotide sequence ID" value="XM_017006380.1"/>
</dbReference>
<dbReference type="RefSeq" id="XP_047304057.1">
    <property type="nucleotide sequence ID" value="XM_047448101.1"/>
</dbReference>
<dbReference type="RefSeq" id="XP_047304058.1">
    <property type="nucleotide sequence ID" value="XM_047448102.1"/>
</dbReference>
<dbReference type="RefSeq" id="XP_047304059.1">
    <property type="nucleotide sequence ID" value="XM_047448103.1"/>
</dbReference>
<dbReference type="RefSeq" id="XP_047304060.1">
    <property type="nucleotide sequence ID" value="XM_047448104.1"/>
</dbReference>
<dbReference type="RefSeq" id="XP_047304061.1">
    <property type="nucleotide sequence ID" value="XM_047448105.1"/>
</dbReference>
<dbReference type="RefSeq" id="XP_047304062.1">
    <property type="nucleotide sequence ID" value="XM_047448106.1"/>
</dbReference>
<dbReference type="RefSeq" id="XP_047304063.1">
    <property type="nucleotide sequence ID" value="XM_047448107.1"/>
</dbReference>
<dbReference type="RefSeq" id="XP_047304064.1">
    <property type="nucleotide sequence ID" value="XM_047448108.1"/>
</dbReference>
<dbReference type="RefSeq" id="XP_047304065.1">
    <property type="nucleotide sequence ID" value="XM_047448109.1"/>
</dbReference>
<dbReference type="RefSeq" id="XP_047304066.1">
    <property type="nucleotide sequence ID" value="XM_047448110.1"/>
</dbReference>
<dbReference type="RefSeq" id="XP_047304067.1">
    <property type="nucleotide sequence ID" value="XM_047448111.1"/>
</dbReference>
<dbReference type="RefSeq" id="XP_047304068.1">
    <property type="nucleotide sequence ID" value="XM_047448112.1"/>
</dbReference>
<dbReference type="RefSeq" id="XP_047304069.1">
    <property type="nucleotide sequence ID" value="XM_047448113.1"/>
</dbReference>
<dbReference type="RefSeq" id="XP_047304070.1">
    <property type="nucleotide sequence ID" value="XM_047448114.1"/>
</dbReference>
<dbReference type="RefSeq" id="XP_047304071.1">
    <property type="nucleotide sequence ID" value="XM_047448115.1"/>
</dbReference>
<dbReference type="RefSeq" id="XP_054202467.1">
    <property type="nucleotide sequence ID" value="XM_054346492.1"/>
</dbReference>
<dbReference type="RefSeq" id="XP_054202468.1">
    <property type="nucleotide sequence ID" value="XM_054346493.1"/>
</dbReference>
<dbReference type="RefSeq" id="XP_054202469.1">
    <property type="nucleotide sequence ID" value="XM_054346494.1"/>
</dbReference>
<dbReference type="RefSeq" id="XP_054202470.1">
    <property type="nucleotide sequence ID" value="XM_054346495.1"/>
</dbReference>
<dbReference type="RefSeq" id="XP_054202471.1">
    <property type="nucleotide sequence ID" value="XM_054346496.1"/>
</dbReference>
<dbReference type="RefSeq" id="XP_054202472.1">
    <property type="nucleotide sequence ID" value="XM_054346497.1"/>
</dbReference>
<dbReference type="RefSeq" id="XP_054202473.1">
    <property type="nucleotide sequence ID" value="XM_054346498.1"/>
</dbReference>
<dbReference type="RefSeq" id="XP_054202474.1">
    <property type="nucleotide sequence ID" value="XM_054346499.1"/>
</dbReference>
<dbReference type="RefSeq" id="XP_054202475.1">
    <property type="nucleotide sequence ID" value="XM_054346500.1"/>
</dbReference>
<dbReference type="RefSeq" id="XP_054202476.1">
    <property type="nucleotide sequence ID" value="XM_054346501.1"/>
</dbReference>
<dbReference type="RefSeq" id="XP_054202477.1">
    <property type="nucleotide sequence ID" value="XM_054346502.1"/>
</dbReference>
<dbReference type="RefSeq" id="XP_054202478.1">
    <property type="nucleotide sequence ID" value="XM_054346503.1"/>
</dbReference>
<dbReference type="RefSeq" id="XP_054202479.1">
    <property type="nucleotide sequence ID" value="XM_054346504.1"/>
</dbReference>
<dbReference type="RefSeq" id="XP_054202480.1">
    <property type="nucleotide sequence ID" value="XM_054346505.1"/>
</dbReference>
<dbReference type="RefSeq" id="XP_054202482.1">
    <property type="nucleotide sequence ID" value="XM_054346507.1"/>
</dbReference>
<dbReference type="SMR" id="Q93052"/>
<dbReference type="BioGRID" id="110208">
    <property type="interactions" value="130"/>
</dbReference>
<dbReference type="CORUM" id="Q93052"/>
<dbReference type="FunCoup" id="Q93052">
    <property type="interactions" value="645"/>
</dbReference>
<dbReference type="IntAct" id="Q93052">
    <property type="interactions" value="38"/>
</dbReference>
<dbReference type="MINT" id="Q93052"/>
<dbReference type="STRING" id="9606.ENSP00000491657"/>
<dbReference type="GlyCosmos" id="Q93052">
    <property type="glycosylation" value="11 sites, 2 glycans"/>
</dbReference>
<dbReference type="GlyGen" id="Q93052">
    <property type="glycosylation" value="15 sites, 2 N-linked glycans (1 site), 3 O-linked glycans (14 sites)"/>
</dbReference>
<dbReference type="iPTMnet" id="Q93052"/>
<dbReference type="MetOSite" id="Q93052"/>
<dbReference type="PhosphoSitePlus" id="Q93052"/>
<dbReference type="BioMuta" id="LPP"/>
<dbReference type="DMDM" id="74751663"/>
<dbReference type="jPOST" id="Q93052"/>
<dbReference type="MassIVE" id="Q93052"/>
<dbReference type="PaxDb" id="9606-ENSP00000482472"/>
<dbReference type="PeptideAtlas" id="Q93052"/>
<dbReference type="ProteomicsDB" id="75690"/>
<dbReference type="Pumba" id="Q93052"/>
<dbReference type="Antibodypedia" id="2772">
    <property type="antibodies" value="261 antibodies from 40 providers"/>
</dbReference>
<dbReference type="DNASU" id="4026"/>
<dbReference type="Ensembl" id="ENST00000414139.6">
    <property type="protein sequence ID" value="ENSP00000392667.2"/>
    <property type="gene ID" value="ENSG00000145012.15"/>
</dbReference>
<dbReference type="Ensembl" id="ENST00000420410.6">
    <property type="protein sequence ID" value="ENSP00000405138.2"/>
    <property type="gene ID" value="ENSG00000145012.15"/>
</dbReference>
<dbReference type="Ensembl" id="ENST00000617246.5">
    <property type="protein sequence ID" value="ENSP00000478901.1"/>
    <property type="gene ID" value="ENSG00000145012.15"/>
</dbReference>
<dbReference type="Ensembl" id="ENST00000618621.5">
    <property type="protein sequence ID" value="ENSP00000482617.2"/>
    <property type="gene ID" value="ENSG00000145012.15"/>
</dbReference>
<dbReference type="GeneID" id="4026"/>
<dbReference type="KEGG" id="hsa:4026"/>
<dbReference type="MANE-Select" id="ENST00000617246.5">
    <property type="protein sequence ID" value="ENSP00000478901.1"/>
    <property type="RefSeq nucleotide sequence ID" value="NM_001375462.1"/>
    <property type="RefSeq protein sequence ID" value="NP_001362391.1"/>
</dbReference>
<dbReference type="UCSC" id="uc032sne.1">
    <property type="organism name" value="human"/>
</dbReference>
<dbReference type="AGR" id="HGNC:6679"/>
<dbReference type="CTD" id="4026"/>
<dbReference type="DisGeNET" id="4026"/>
<dbReference type="GeneCards" id="LPP"/>
<dbReference type="HGNC" id="HGNC:6679">
    <property type="gene designation" value="LPP"/>
</dbReference>
<dbReference type="HPA" id="ENSG00000145012">
    <property type="expression patterns" value="Low tissue specificity"/>
</dbReference>
<dbReference type="MalaCards" id="LPP"/>
<dbReference type="MIM" id="600700">
    <property type="type" value="gene"/>
</dbReference>
<dbReference type="neXtProt" id="NX_Q93052"/>
<dbReference type="OpenTargets" id="ENSG00000145012"/>
<dbReference type="PharmGKB" id="PA30440"/>
<dbReference type="VEuPathDB" id="HostDB:ENSG00000145012"/>
<dbReference type="eggNOG" id="KOG1701">
    <property type="taxonomic scope" value="Eukaryota"/>
</dbReference>
<dbReference type="GeneTree" id="ENSGT00940000156022"/>
<dbReference type="InParanoid" id="Q93052"/>
<dbReference type="OMA" id="GGMDYTY"/>
<dbReference type="OrthoDB" id="25414at2759"/>
<dbReference type="PAN-GO" id="Q93052">
    <property type="GO annotations" value="3 GO annotations based on evolutionary models"/>
</dbReference>
<dbReference type="PhylomeDB" id="Q93052"/>
<dbReference type="TreeFam" id="TF320310"/>
<dbReference type="PathwayCommons" id="Q93052"/>
<dbReference type="SignaLink" id="Q93052"/>
<dbReference type="SIGNOR" id="Q93052"/>
<dbReference type="BioGRID-ORCS" id="4026">
    <property type="hits" value="10 hits in 1159 CRISPR screens"/>
</dbReference>
<dbReference type="CD-CODE" id="DEE660B4">
    <property type="entry name" value="Stress granule"/>
</dbReference>
<dbReference type="ChiTaRS" id="LPP">
    <property type="organism name" value="human"/>
</dbReference>
<dbReference type="GeneWiki" id="LPP_(gene)"/>
<dbReference type="GenomeRNAi" id="4026"/>
<dbReference type="Pharos" id="Q93052">
    <property type="development level" value="Tbio"/>
</dbReference>
<dbReference type="PRO" id="PR:Q93052"/>
<dbReference type="Proteomes" id="UP000005640">
    <property type="component" value="Chromosome 3"/>
</dbReference>
<dbReference type="RNAct" id="Q93052">
    <property type="molecule type" value="protein"/>
</dbReference>
<dbReference type="Bgee" id="ENSG00000145012">
    <property type="expression patterns" value="Expressed in saphenous vein and 214 other cell types or tissues"/>
</dbReference>
<dbReference type="ExpressionAtlas" id="Q93052">
    <property type="expression patterns" value="baseline and differential"/>
</dbReference>
<dbReference type="GO" id="GO:0005829">
    <property type="term" value="C:cytosol"/>
    <property type="evidence" value="ECO:0000314"/>
    <property type="project" value="HPA"/>
</dbReference>
<dbReference type="GO" id="GO:0005925">
    <property type="term" value="C:focal adhesion"/>
    <property type="evidence" value="ECO:0000314"/>
    <property type="project" value="HPA"/>
</dbReference>
<dbReference type="GO" id="GO:0005634">
    <property type="term" value="C:nucleus"/>
    <property type="evidence" value="ECO:0007669"/>
    <property type="project" value="UniProtKB-SubCell"/>
</dbReference>
<dbReference type="GO" id="GO:0005886">
    <property type="term" value="C:plasma membrane"/>
    <property type="evidence" value="ECO:0000314"/>
    <property type="project" value="HPA"/>
</dbReference>
<dbReference type="GO" id="GO:0001725">
    <property type="term" value="C:stress fiber"/>
    <property type="evidence" value="ECO:0000318"/>
    <property type="project" value="GO_Central"/>
</dbReference>
<dbReference type="GO" id="GO:0046872">
    <property type="term" value="F:metal ion binding"/>
    <property type="evidence" value="ECO:0007669"/>
    <property type="project" value="UniProtKB-KW"/>
</dbReference>
<dbReference type="GO" id="GO:0098609">
    <property type="term" value="P:cell-cell adhesion"/>
    <property type="evidence" value="ECO:0000318"/>
    <property type="project" value="GO_Central"/>
</dbReference>
<dbReference type="CDD" id="cd09350">
    <property type="entry name" value="LIM1_TRIP6"/>
    <property type="match status" value="1"/>
</dbReference>
<dbReference type="CDD" id="cd09356">
    <property type="entry name" value="LIM2_TRIP6"/>
    <property type="match status" value="1"/>
</dbReference>
<dbReference type="CDD" id="cd09436">
    <property type="entry name" value="LIM3_TRIP6"/>
    <property type="match status" value="1"/>
</dbReference>
<dbReference type="FunFam" id="2.10.110.10:FF:000027">
    <property type="entry name" value="lipoma-preferred partner isoform X1"/>
    <property type="match status" value="1"/>
</dbReference>
<dbReference type="FunFam" id="2.10.110.10:FF:000042">
    <property type="entry name" value="lipoma-preferred partner isoform X1"/>
    <property type="match status" value="1"/>
</dbReference>
<dbReference type="FunFam" id="2.10.110.10:FF:000047">
    <property type="entry name" value="lipoma-preferred partner isoform X1"/>
    <property type="match status" value="1"/>
</dbReference>
<dbReference type="Gene3D" id="2.10.110.10">
    <property type="entry name" value="Cysteine Rich Protein"/>
    <property type="match status" value="3"/>
</dbReference>
<dbReference type="InterPro" id="IPR001781">
    <property type="entry name" value="Znf_LIM"/>
</dbReference>
<dbReference type="PANTHER" id="PTHR24207:SF0">
    <property type="entry name" value="LIPOMA-PREFERRED PARTNER"/>
    <property type="match status" value="1"/>
</dbReference>
<dbReference type="PANTHER" id="PTHR24207">
    <property type="entry name" value="ZYX102 PROTEIN"/>
    <property type="match status" value="1"/>
</dbReference>
<dbReference type="Pfam" id="PF00412">
    <property type="entry name" value="LIM"/>
    <property type="match status" value="3"/>
</dbReference>
<dbReference type="SMART" id="SM00132">
    <property type="entry name" value="LIM"/>
    <property type="match status" value="3"/>
</dbReference>
<dbReference type="SUPFAM" id="SSF57716">
    <property type="entry name" value="Glucocorticoid receptor-like (DNA-binding domain)"/>
    <property type="match status" value="3"/>
</dbReference>
<dbReference type="PROSITE" id="PS00478">
    <property type="entry name" value="LIM_DOMAIN_1"/>
    <property type="match status" value="2"/>
</dbReference>
<dbReference type="PROSITE" id="PS50023">
    <property type="entry name" value="LIM_DOMAIN_2"/>
    <property type="match status" value="3"/>
</dbReference>
<reference key="1">
    <citation type="journal article" date="1996" name="Genomics">
        <title>LPP, the preferred fusion partner gene of HMGIC in lipomas, is a novel member of the LIM protein gene family.</title>
        <authorList>
            <person name="Petit M.M.R."/>
            <person name="Mols R."/>
            <person name="Schoenmakers E.F."/>
            <person name="Mandahl N."/>
            <person name="Van de Ven W.J.M."/>
        </authorList>
    </citation>
    <scope>NUCLEOTIDE SEQUENCE [GENOMIC DNA / MRNA]</scope>
    <scope>CHROMOSOMAL TRANSLOCATION WITH HMGA2</scope>
    <scope>TISSUE SPECIFICITY</scope>
    <source>
        <tissue>Small intestine</tissue>
    </source>
</reference>
<reference key="2">
    <citation type="submission" date="2004-06" db="EMBL/GenBank/DDBJ databases">
        <title>Cloning of human full open reading frames in Gateway(TM) system entry vector (pDONR201).</title>
        <authorList>
            <person name="Ebert L."/>
            <person name="Schick M."/>
            <person name="Neubert P."/>
            <person name="Schatten R."/>
            <person name="Henze S."/>
            <person name="Korn B."/>
        </authorList>
    </citation>
    <scope>NUCLEOTIDE SEQUENCE [LARGE SCALE MRNA]</scope>
</reference>
<reference key="3">
    <citation type="submission" date="2005-09" db="EMBL/GenBank/DDBJ databases">
        <authorList>
            <person name="Mural R.J."/>
            <person name="Istrail S."/>
            <person name="Sutton G.G."/>
            <person name="Florea L."/>
            <person name="Halpern A.L."/>
            <person name="Mobarry C.M."/>
            <person name="Lippert R."/>
            <person name="Walenz B."/>
            <person name="Shatkay H."/>
            <person name="Dew I."/>
            <person name="Miller J.R."/>
            <person name="Flanigan M.J."/>
            <person name="Edwards N.J."/>
            <person name="Bolanos R."/>
            <person name="Fasulo D."/>
            <person name="Halldorsson B.V."/>
            <person name="Hannenhalli S."/>
            <person name="Turner R."/>
            <person name="Yooseph S."/>
            <person name="Lu F."/>
            <person name="Nusskern D.R."/>
            <person name="Shue B.C."/>
            <person name="Zheng X.H."/>
            <person name="Zhong F."/>
            <person name="Delcher A.L."/>
            <person name="Huson D.H."/>
            <person name="Kravitz S.A."/>
            <person name="Mouchard L."/>
            <person name="Reinert K."/>
            <person name="Remington K.A."/>
            <person name="Clark A.G."/>
            <person name="Waterman M.S."/>
            <person name="Eichler E.E."/>
            <person name="Adams M.D."/>
            <person name="Hunkapiller M.W."/>
            <person name="Myers E.W."/>
            <person name="Venter J.C."/>
        </authorList>
    </citation>
    <scope>NUCLEOTIDE SEQUENCE [LARGE SCALE GENOMIC DNA]</scope>
</reference>
<reference key="4">
    <citation type="journal article" date="2004" name="Genome Res.">
        <title>The status, quality, and expansion of the NIH full-length cDNA project: the Mammalian Gene Collection (MGC).</title>
        <authorList>
            <consortium name="The MGC Project Team"/>
        </authorList>
    </citation>
    <scope>NUCLEOTIDE SEQUENCE [LARGE SCALE MRNA]</scope>
</reference>
<reference key="5">
    <citation type="journal article" date="2001" name="Cytogenet. Cell Genet.">
        <title>A novel LPP fusion gene indicates the crucial role of truncated LPP proteins in lipomas and pulmonary chondroid hamartomas.</title>
        <authorList>
            <person name="Lemke I."/>
            <person name="Rogalla P."/>
            <person name="Bullerdiek J."/>
        </authorList>
    </citation>
    <scope>NUCLEOTIDE SEQUENCE [MRNA] OF 276-371</scope>
</reference>
<reference key="6">
    <citation type="journal article" date="1998" name="Cancer Genet. Cytogenet.">
        <title>Expression of reciprocal fusion transcripts of the HMGIC and LPP genes in parosteal lipoma.</title>
        <authorList>
            <person name="Petit M.M."/>
            <person name="Swarts S."/>
            <person name="Bridge J.A."/>
            <person name="Van de Ven W.J.M."/>
        </authorList>
    </citation>
    <scope>CHROMOSOMAL TRANSLOCATION WITH HMGA2</scope>
</reference>
<reference key="7">
    <citation type="journal article" date="2000" name="Genes Chromosomes Cancer">
        <title>An identical HMGIC-LPP fusion transcript is consistently expressed in pulmonary chondroid hamartomas with t(3;12)(q27-28;q14-15).</title>
        <authorList>
            <person name="Rogalla P."/>
            <person name="Lemke I."/>
            <person name="Kazmierczak B."/>
            <person name="Bullerdiek J."/>
        </authorList>
    </citation>
    <scope>CHROMOSOMAL TRANSLOCATION WITH HMGA2</scope>
</reference>
<reference key="8">
    <citation type="journal article" date="2000" name="Mol. Biol. Cell">
        <title>LPP, an actin cytoskeleton protein related to zyxin, harbors a nuclear export signal and transcriptional activation capacity.</title>
        <authorList>
            <person name="Petit M.M."/>
            <person name="Fradelizi J."/>
            <person name="Golsteyn R.M."/>
            <person name="Ayoubi T.A."/>
            <person name="Menichi B."/>
            <person name="Louvard D."/>
            <person name="Van de Ven W.J.M."/>
            <person name="Friederich E."/>
        </authorList>
    </citation>
    <scope>FUNCTION</scope>
    <scope>SUBCELLULAR LOCATION</scope>
    <scope>TISSUE SPECIFICITY</scope>
    <scope>INTERACTION WITH VASP</scope>
</reference>
<reference key="9">
    <citation type="journal article" date="2001" name="Genes Chromosomes Cancer">
        <title>Human LPP gene is fused to MLL in a secondary acute leukemia with a t(3;11) (q28;q23).</title>
        <authorList>
            <person name="Daheron L."/>
            <person name="Veinstein A."/>
            <person name="Brizard F."/>
            <person name="Drabkin H."/>
            <person name="Lacotte L."/>
            <person name="Guilhot F."/>
            <person name="Larsen C.J."/>
            <person name="Brizard A."/>
            <person name="Roche J."/>
        </authorList>
    </citation>
    <scope>CHROMOSOMAL TRANSLOCATION WITH KMT2A/MLL1</scope>
</reference>
<reference key="10">
    <citation type="journal article" date="2003" name="J. Biol. Chem.">
        <title>The focal adhesion and nuclear targeting capacity of the LIM-containing lipoma-preferred partner (LPP) protein.</title>
        <authorList>
            <person name="Petit M.M."/>
            <person name="Meulemans S.M."/>
            <person name="Van de Ven W.J.M."/>
        </authorList>
    </citation>
    <scope>SUBCELLULAR LOCATION</scope>
    <scope>INTERACTION WITH VASP AND ACTN1</scope>
</reference>
<reference key="11">
    <citation type="journal article" date="2003" name="J. Cell Sci.">
        <title>The lipoma preferred partner LPP interacts with alpha-actinin.</title>
        <authorList>
            <person name="Li B."/>
            <person name="Zhuang L."/>
            <person name="Reinhard M."/>
            <person name="Trueb B."/>
        </authorList>
    </citation>
    <scope>INTERACTION WITH ACTN1</scope>
</reference>
<reference key="12">
    <citation type="journal article" date="2003" name="Proc. Natl. Acad. Sci. U.S.A.">
        <title>Profiling of tyrosine phosphorylation pathways in human cells using mass spectrometry.</title>
        <authorList>
            <person name="Salomon A.R."/>
            <person name="Ficarro S.B."/>
            <person name="Brill L.M."/>
            <person name="Brinker A."/>
            <person name="Phung Q.T."/>
            <person name="Ericson C."/>
            <person name="Sauer K."/>
            <person name="Brock A."/>
            <person name="Horn D.M."/>
            <person name="Schultz P.G."/>
            <person name="Peters E.C."/>
        </authorList>
    </citation>
    <scope>IDENTIFICATION BY MASS SPECTROMETRY [LARGE SCALE ANALYSIS]</scope>
</reference>
<reference key="13">
    <citation type="journal article" date="2004" name="Anal. Chem.">
        <title>Robust phosphoproteomic profiling of tyrosine phosphorylation sites from human T cells using immobilized metal affinity chromatography and tandem mass spectrometry.</title>
        <authorList>
            <person name="Brill L.M."/>
            <person name="Salomon A.R."/>
            <person name="Ficarro S.B."/>
            <person name="Mukherji M."/>
            <person name="Stettler-Gill M."/>
            <person name="Peters E.C."/>
        </authorList>
    </citation>
    <scope>IDENTIFICATION BY MASS SPECTROMETRY [LARGE SCALE ANALYSIS]</scope>
    <source>
        <tissue>Leukemic T-cell</tissue>
    </source>
</reference>
<reference key="14">
    <citation type="journal article" date="2005" name="BMC Cell Biol.">
        <title>The tumor suppressor Scrib interacts with the zyxin-related protein LPP, which shuttles between cell adhesion sites and the nucleus.</title>
        <authorList>
            <person name="Petit M.M.R."/>
            <person name="Meulemans S.M.P."/>
            <person name="Alen P."/>
            <person name="Ayoubi T.A.Y."/>
            <person name="Jansen E."/>
            <person name="Van de Ven W.J.M."/>
        </authorList>
    </citation>
    <scope>INTERACTION WITH SCRIB</scope>
    <scope>MUTAGENESIS</scope>
</reference>
<reference key="15">
    <citation type="journal article" date="2005" name="Nat. Biotechnol.">
        <title>Immunoaffinity profiling of tyrosine phosphorylation in cancer cells.</title>
        <authorList>
            <person name="Rush J."/>
            <person name="Moritz A."/>
            <person name="Lee K.A."/>
            <person name="Guo A."/>
            <person name="Goss V.L."/>
            <person name="Spek E.J."/>
            <person name="Zhang H."/>
            <person name="Zha X.-M."/>
            <person name="Polakiewicz R.D."/>
            <person name="Comb M.J."/>
        </authorList>
    </citation>
    <scope>IDENTIFICATION BY MASS SPECTROMETRY [LARGE SCALE ANALYSIS]</scope>
</reference>
<reference key="16">
    <citation type="journal article" date="2006" name="Cell">
        <title>Global, in vivo, and site-specific phosphorylation dynamics in signaling networks.</title>
        <authorList>
            <person name="Olsen J.V."/>
            <person name="Blagoev B."/>
            <person name="Gnad F."/>
            <person name="Macek B."/>
            <person name="Kumar C."/>
            <person name="Mortensen P."/>
            <person name="Mann M."/>
        </authorList>
    </citation>
    <scope>IDENTIFICATION BY MASS SPECTROMETRY [LARGE SCALE ANALYSIS]</scope>
    <source>
        <tissue>Cervix carcinoma</tissue>
    </source>
</reference>
<reference key="17">
    <citation type="journal article" date="2008" name="Proc. Natl. Acad. Sci. U.S.A.">
        <title>A quantitative atlas of mitotic phosphorylation.</title>
        <authorList>
            <person name="Dephoure N."/>
            <person name="Zhou C."/>
            <person name="Villen J."/>
            <person name="Beausoleil S.A."/>
            <person name="Bakalarski C.E."/>
            <person name="Elledge S.J."/>
            <person name="Gygi S.P."/>
        </authorList>
    </citation>
    <scope>PHOSPHORYLATION [LARGE SCALE ANALYSIS] AT THR-333</scope>
    <scope>IDENTIFICATION BY MASS SPECTROMETRY [LARGE SCALE ANALYSIS]</scope>
    <source>
        <tissue>Cervix carcinoma</tissue>
    </source>
</reference>
<reference key="18">
    <citation type="journal article" date="2010" name="Sci. Signal.">
        <title>Quantitative phosphoproteomics reveals widespread full phosphorylation site occupancy during mitosis.</title>
        <authorList>
            <person name="Olsen J.V."/>
            <person name="Vermeulen M."/>
            <person name="Santamaria A."/>
            <person name="Kumar C."/>
            <person name="Miller M.L."/>
            <person name="Jensen L.J."/>
            <person name="Gnad F."/>
            <person name="Cox J."/>
            <person name="Jensen T.S."/>
            <person name="Nigg E.A."/>
            <person name="Brunak S."/>
            <person name="Mann M."/>
        </authorList>
    </citation>
    <scope>IDENTIFICATION BY MASS SPECTROMETRY [LARGE SCALE ANALYSIS]</scope>
    <source>
        <tissue>Cervix carcinoma</tissue>
    </source>
</reference>
<reference key="19">
    <citation type="journal article" date="2011" name="BMC Syst. Biol.">
        <title>Initial characterization of the human central proteome.</title>
        <authorList>
            <person name="Burkard T.R."/>
            <person name="Planyavsky M."/>
            <person name="Kaupe I."/>
            <person name="Breitwieser F.P."/>
            <person name="Buerckstuemmer T."/>
            <person name="Bennett K.L."/>
            <person name="Superti-Furga G."/>
            <person name="Colinge J."/>
        </authorList>
    </citation>
    <scope>IDENTIFICATION BY MASS SPECTROMETRY [LARGE SCALE ANALYSIS]</scope>
</reference>
<reference key="20">
    <citation type="journal article" date="2014" name="J. Proteomics">
        <title>An enzyme assisted RP-RPLC approach for in-depth analysis of human liver phosphoproteome.</title>
        <authorList>
            <person name="Bian Y."/>
            <person name="Song C."/>
            <person name="Cheng K."/>
            <person name="Dong M."/>
            <person name="Wang F."/>
            <person name="Huang J."/>
            <person name="Sun D."/>
            <person name="Wang L."/>
            <person name="Ye M."/>
            <person name="Zou H."/>
        </authorList>
    </citation>
    <scope>PHOSPHORYLATION [LARGE SCALE ANALYSIS] AT SER-375</scope>
    <scope>IDENTIFICATION BY MASS SPECTROMETRY [LARGE SCALE ANALYSIS]</scope>
    <source>
        <tissue>Liver</tissue>
    </source>
</reference>
<reference key="21">
    <citation type="journal article" date="2014" name="Proc. Natl. Acad. Sci. U.S.A.">
        <title>Mapping of SUMO sites and analysis of SUMOylation changes induced by external stimuli.</title>
        <authorList>
            <person name="Impens F."/>
            <person name="Radoshevich L."/>
            <person name="Cossart P."/>
            <person name="Ribet D."/>
        </authorList>
    </citation>
    <scope>SUMOYLATION [LARGE SCALE ANALYSIS] AT LYS-327</scope>
    <scope>IDENTIFICATION BY MASS SPECTROMETRY [LARGE SCALE ANALYSIS]</scope>
</reference>
<protein>
    <recommendedName>
        <fullName>Lipoma-preferred partner</fullName>
    </recommendedName>
    <alternativeName>
        <fullName>LIM domain-containing preferred translocation partner in lipoma</fullName>
    </alternativeName>
</protein>
<organism>
    <name type="scientific">Homo sapiens</name>
    <name type="common">Human</name>
    <dbReference type="NCBI Taxonomy" id="9606"/>
    <lineage>
        <taxon>Eukaryota</taxon>
        <taxon>Metazoa</taxon>
        <taxon>Chordata</taxon>
        <taxon>Craniata</taxon>
        <taxon>Vertebrata</taxon>
        <taxon>Euteleostomi</taxon>
        <taxon>Mammalia</taxon>
        <taxon>Eutheria</taxon>
        <taxon>Euarchontoglires</taxon>
        <taxon>Primates</taxon>
        <taxon>Haplorrhini</taxon>
        <taxon>Catarrhini</taxon>
        <taxon>Hominidae</taxon>
        <taxon>Homo</taxon>
    </lineage>
</organism>
<sequence>MSHPSWLPPKSTGEPLGHVPARMETTHSFGNPSISVSTQQPPKKFAPVVAPKPKYNPYKQPGGEGDFLPPPPPPLDDSSALPSISGNFPPPPPLDEEAFKVQGNPGGKTLEERRSSLDAEIDSLTSILADLECSSPYKPRPPQSSTGSTASPPVSTPVTGHKRMVIPNQPPLTATKKSTLKPQPAPQAGPIPVAPIGTLKPQPQPVPASYTTASTSSRPTFNVQVKSAQPSPHYMAAPSSGQIYGSGPQGYNTQPVPVSGQCPPPSTRGGMDYAYIPPPGLQPEPGYGYAPNQGRYYEGYYAAGPGYGGRNDSDPTYGQQGHPNTWKREPGYTPPGAGNQNPPGMYPVTGPKKTYITDPVSAPCAPPLQPKGGHSGQLGPSSVAPSFRPEDELEHLTKKMLYDMENPPADEYFGRCARCGENVVGEGTGCTAMDQVFHVDCFTCIICNNKLRGQPFYAVEKKAYCEPCYINTLEQCNVCSKPIMERILRATGKAYHPHCFTCVMCHRSLDGIPFTVDAGGLIHCIEDFHKKFAPRCSVCKEPIMPAPGQEETVRIVALDRDFHVHCYRCEDCGGLLSEGDNQGCYPLDGHILCKTCNSARIRVLTAKASTDL</sequence>
<keyword id="KW-0007">Acetylation</keyword>
<keyword id="KW-0010">Activator</keyword>
<keyword id="KW-0130">Cell adhesion</keyword>
<keyword id="KW-0965">Cell junction</keyword>
<keyword id="KW-1003">Cell membrane</keyword>
<keyword id="KW-0160">Chromosomal rearrangement</keyword>
<keyword id="KW-0963">Cytoplasm</keyword>
<keyword id="KW-1017">Isopeptide bond</keyword>
<keyword id="KW-0440">LIM domain</keyword>
<keyword id="KW-0472">Membrane</keyword>
<keyword id="KW-0479">Metal-binding</keyword>
<keyword id="KW-0539">Nucleus</keyword>
<keyword id="KW-0597">Phosphoprotein</keyword>
<keyword id="KW-1267">Proteomics identification</keyword>
<keyword id="KW-1185">Reference proteome</keyword>
<keyword id="KW-0677">Repeat</keyword>
<keyword id="KW-0832">Ubl conjugation</keyword>
<keyword id="KW-0862">Zinc</keyword>
<gene>
    <name type="primary">LPP</name>
</gene>